<protein>
    <recommendedName>
        <fullName evidence="1">ATP synthase subunit alpha</fullName>
        <ecNumber evidence="1">7.1.2.2</ecNumber>
    </recommendedName>
    <alternativeName>
        <fullName evidence="1">ATP synthase F1 sector subunit alpha</fullName>
    </alternativeName>
    <alternativeName>
        <fullName evidence="1">F-ATPase subunit alpha</fullName>
    </alternativeName>
</protein>
<gene>
    <name evidence="1" type="primary">atpA</name>
    <name type="ordered locus">XC_3680</name>
</gene>
<sequence length="515" mass="55324">MATTLNPSEISDLIKTRIEAVKLSAESRNEGSVTSVSDGIVRIFGLADVMQGEMIELPNNTFALALNLERDSVGAVVLGDYENLREGDVAKTTGRILEVPVGPELLGRVVNALGEPIDGKGPLGATQTAPVERVAPGVIWRKSVDQPVQTGYKSVDAMIPIGRGQRELVIGDRQTGKTALAIDAVINQKGTGIKCVYVAIGQKASTVANIVRKLEENGALAHTVVVAATASESAAMQYISPYAGCTMGEYFMDRGEDALIVYDDLSKQAVAYRQISLLLKRPPGREAYPGDVFYLHSRLLERAARVSEEYVEKFTNGAVTGKTGSLTALPIIETQAGDVSAFVPTNVISITDGQIFLETDLFNAGIRPAVNAGISVSRVGGAAQTKIIKKLSGGIRISLAQYRELAAFAQFASDLDEATRKQLERGQRVTELMKQKQYAPMSIANQALSIYAVNEGYLDEVPVNKLLAFEEGLHAHFANTQGELVSKINTTGGWDNDIEAAFKKGIEEFKTTGSW</sequence>
<keyword id="KW-0066">ATP synthesis</keyword>
<keyword id="KW-0067">ATP-binding</keyword>
<keyword id="KW-0997">Cell inner membrane</keyword>
<keyword id="KW-1003">Cell membrane</keyword>
<keyword id="KW-0139">CF(1)</keyword>
<keyword id="KW-0375">Hydrogen ion transport</keyword>
<keyword id="KW-0406">Ion transport</keyword>
<keyword id="KW-0472">Membrane</keyword>
<keyword id="KW-0547">Nucleotide-binding</keyword>
<keyword id="KW-1278">Translocase</keyword>
<keyword id="KW-0813">Transport</keyword>
<dbReference type="EC" id="7.1.2.2" evidence="1"/>
<dbReference type="EMBL" id="CP000050">
    <property type="protein sequence ID" value="AAY50721.1"/>
    <property type="molecule type" value="Genomic_DNA"/>
</dbReference>
<dbReference type="RefSeq" id="WP_011035799.1">
    <property type="nucleotide sequence ID" value="NZ_CP155948.1"/>
</dbReference>
<dbReference type="SMR" id="Q4UQF2"/>
<dbReference type="GeneID" id="58014887"/>
<dbReference type="KEGG" id="xcb:XC_3680"/>
<dbReference type="HOGENOM" id="CLU_010091_2_1_6"/>
<dbReference type="Proteomes" id="UP000000420">
    <property type="component" value="Chromosome"/>
</dbReference>
<dbReference type="GO" id="GO:0005886">
    <property type="term" value="C:plasma membrane"/>
    <property type="evidence" value="ECO:0007669"/>
    <property type="project" value="UniProtKB-SubCell"/>
</dbReference>
<dbReference type="GO" id="GO:0045259">
    <property type="term" value="C:proton-transporting ATP synthase complex"/>
    <property type="evidence" value="ECO:0007669"/>
    <property type="project" value="UniProtKB-KW"/>
</dbReference>
<dbReference type="GO" id="GO:0043531">
    <property type="term" value="F:ADP binding"/>
    <property type="evidence" value="ECO:0007669"/>
    <property type="project" value="TreeGrafter"/>
</dbReference>
<dbReference type="GO" id="GO:0005524">
    <property type="term" value="F:ATP binding"/>
    <property type="evidence" value="ECO:0007669"/>
    <property type="project" value="UniProtKB-UniRule"/>
</dbReference>
<dbReference type="GO" id="GO:0046933">
    <property type="term" value="F:proton-transporting ATP synthase activity, rotational mechanism"/>
    <property type="evidence" value="ECO:0007669"/>
    <property type="project" value="UniProtKB-UniRule"/>
</dbReference>
<dbReference type="CDD" id="cd18113">
    <property type="entry name" value="ATP-synt_F1_alpha_C"/>
    <property type="match status" value="1"/>
</dbReference>
<dbReference type="CDD" id="cd18116">
    <property type="entry name" value="ATP-synt_F1_alpha_N"/>
    <property type="match status" value="1"/>
</dbReference>
<dbReference type="CDD" id="cd01132">
    <property type="entry name" value="F1-ATPase_alpha_CD"/>
    <property type="match status" value="1"/>
</dbReference>
<dbReference type="FunFam" id="1.20.150.20:FF:000001">
    <property type="entry name" value="ATP synthase subunit alpha"/>
    <property type="match status" value="1"/>
</dbReference>
<dbReference type="FunFam" id="2.40.30.20:FF:000001">
    <property type="entry name" value="ATP synthase subunit alpha"/>
    <property type="match status" value="1"/>
</dbReference>
<dbReference type="FunFam" id="3.40.50.300:FF:000002">
    <property type="entry name" value="ATP synthase subunit alpha"/>
    <property type="match status" value="1"/>
</dbReference>
<dbReference type="Gene3D" id="2.40.30.20">
    <property type="match status" value="1"/>
</dbReference>
<dbReference type="Gene3D" id="1.20.150.20">
    <property type="entry name" value="ATP synthase alpha/beta chain, C-terminal domain"/>
    <property type="match status" value="1"/>
</dbReference>
<dbReference type="Gene3D" id="3.40.50.300">
    <property type="entry name" value="P-loop containing nucleotide triphosphate hydrolases"/>
    <property type="match status" value="1"/>
</dbReference>
<dbReference type="HAMAP" id="MF_01346">
    <property type="entry name" value="ATP_synth_alpha_bact"/>
    <property type="match status" value="1"/>
</dbReference>
<dbReference type="InterPro" id="IPR023366">
    <property type="entry name" value="ATP_synth_asu-like_sf"/>
</dbReference>
<dbReference type="InterPro" id="IPR000793">
    <property type="entry name" value="ATP_synth_asu_C"/>
</dbReference>
<dbReference type="InterPro" id="IPR038376">
    <property type="entry name" value="ATP_synth_asu_C_sf"/>
</dbReference>
<dbReference type="InterPro" id="IPR033732">
    <property type="entry name" value="ATP_synth_F1_a_nt-bd_dom"/>
</dbReference>
<dbReference type="InterPro" id="IPR005294">
    <property type="entry name" value="ATP_synth_F1_asu"/>
</dbReference>
<dbReference type="InterPro" id="IPR020003">
    <property type="entry name" value="ATPase_a/bsu_AS"/>
</dbReference>
<dbReference type="InterPro" id="IPR004100">
    <property type="entry name" value="ATPase_F1/V1/A1_a/bsu_N"/>
</dbReference>
<dbReference type="InterPro" id="IPR036121">
    <property type="entry name" value="ATPase_F1/V1/A1_a/bsu_N_sf"/>
</dbReference>
<dbReference type="InterPro" id="IPR000194">
    <property type="entry name" value="ATPase_F1/V1/A1_a/bsu_nucl-bd"/>
</dbReference>
<dbReference type="InterPro" id="IPR027417">
    <property type="entry name" value="P-loop_NTPase"/>
</dbReference>
<dbReference type="NCBIfam" id="TIGR00962">
    <property type="entry name" value="atpA"/>
    <property type="match status" value="1"/>
</dbReference>
<dbReference type="NCBIfam" id="NF009884">
    <property type="entry name" value="PRK13343.1"/>
    <property type="match status" value="1"/>
</dbReference>
<dbReference type="PANTHER" id="PTHR48082">
    <property type="entry name" value="ATP SYNTHASE SUBUNIT ALPHA, MITOCHONDRIAL"/>
    <property type="match status" value="1"/>
</dbReference>
<dbReference type="PANTHER" id="PTHR48082:SF2">
    <property type="entry name" value="ATP SYNTHASE SUBUNIT ALPHA, MITOCHONDRIAL"/>
    <property type="match status" value="1"/>
</dbReference>
<dbReference type="Pfam" id="PF00006">
    <property type="entry name" value="ATP-synt_ab"/>
    <property type="match status" value="1"/>
</dbReference>
<dbReference type="Pfam" id="PF00306">
    <property type="entry name" value="ATP-synt_ab_C"/>
    <property type="match status" value="1"/>
</dbReference>
<dbReference type="Pfam" id="PF02874">
    <property type="entry name" value="ATP-synt_ab_N"/>
    <property type="match status" value="1"/>
</dbReference>
<dbReference type="SUPFAM" id="SSF47917">
    <property type="entry name" value="C-terminal domain of alpha and beta subunits of F1 ATP synthase"/>
    <property type="match status" value="1"/>
</dbReference>
<dbReference type="SUPFAM" id="SSF50615">
    <property type="entry name" value="N-terminal domain of alpha and beta subunits of F1 ATP synthase"/>
    <property type="match status" value="1"/>
</dbReference>
<dbReference type="SUPFAM" id="SSF52540">
    <property type="entry name" value="P-loop containing nucleoside triphosphate hydrolases"/>
    <property type="match status" value="1"/>
</dbReference>
<dbReference type="PROSITE" id="PS00152">
    <property type="entry name" value="ATPASE_ALPHA_BETA"/>
    <property type="match status" value="1"/>
</dbReference>
<feature type="chain" id="PRO_0000238404" description="ATP synthase subunit alpha">
    <location>
        <begin position="1"/>
        <end position="515"/>
    </location>
</feature>
<feature type="binding site" evidence="1">
    <location>
        <begin position="171"/>
        <end position="178"/>
    </location>
    <ligand>
        <name>ATP</name>
        <dbReference type="ChEBI" id="CHEBI:30616"/>
    </ligand>
</feature>
<feature type="site" description="Required for activity" evidence="1">
    <location>
        <position position="375"/>
    </location>
</feature>
<reference key="1">
    <citation type="journal article" date="2005" name="Genome Res.">
        <title>Comparative and functional genomic analyses of the pathogenicity of phytopathogen Xanthomonas campestris pv. campestris.</title>
        <authorList>
            <person name="Qian W."/>
            <person name="Jia Y."/>
            <person name="Ren S.-X."/>
            <person name="He Y.-Q."/>
            <person name="Feng J.-X."/>
            <person name="Lu L.-F."/>
            <person name="Sun Q."/>
            <person name="Ying G."/>
            <person name="Tang D.-J."/>
            <person name="Tang H."/>
            <person name="Wu W."/>
            <person name="Hao P."/>
            <person name="Wang L."/>
            <person name="Jiang B.-L."/>
            <person name="Zeng S."/>
            <person name="Gu W.-Y."/>
            <person name="Lu G."/>
            <person name="Rong L."/>
            <person name="Tian Y."/>
            <person name="Yao Z."/>
            <person name="Fu G."/>
            <person name="Chen B."/>
            <person name="Fang R."/>
            <person name="Qiang B."/>
            <person name="Chen Z."/>
            <person name="Zhao G.-P."/>
            <person name="Tang J.-L."/>
            <person name="He C."/>
        </authorList>
    </citation>
    <scope>NUCLEOTIDE SEQUENCE [LARGE SCALE GENOMIC DNA]</scope>
    <source>
        <strain>8004</strain>
    </source>
</reference>
<name>ATPA_XANC8</name>
<accession>Q4UQF2</accession>
<organism>
    <name type="scientific">Xanthomonas campestris pv. campestris (strain 8004)</name>
    <dbReference type="NCBI Taxonomy" id="314565"/>
    <lineage>
        <taxon>Bacteria</taxon>
        <taxon>Pseudomonadati</taxon>
        <taxon>Pseudomonadota</taxon>
        <taxon>Gammaproteobacteria</taxon>
        <taxon>Lysobacterales</taxon>
        <taxon>Lysobacteraceae</taxon>
        <taxon>Xanthomonas</taxon>
    </lineage>
</organism>
<proteinExistence type="inferred from homology"/>
<evidence type="ECO:0000255" key="1">
    <source>
        <dbReference type="HAMAP-Rule" id="MF_01346"/>
    </source>
</evidence>
<comment type="function">
    <text evidence="1">Produces ATP from ADP in the presence of a proton gradient across the membrane. The alpha chain is a regulatory subunit.</text>
</comment>
<comment type="catalytic activity">
    <reaction evidence="1">
        <text>ATP + H2O + 4 H(+)(in) = ADP + phosphate + 5 H(+)(out)</text>
        <dbReference type="Rhea" id="RHEA:57720"/>
        <dbReference type="ChEBI" id="CHEBI:15377"/>
        <dbReference type="ChEBI" id="CHEBI:15378"/>
        <dbReference type="ChEBI" id="CHEBI:30616"/>
        <dbReference type="ChEBI" id="CHEBI:43474"/>
        <dbReference type="ChEBI" id="CHEBI:456216"/>
        <dbReference type="EC" id="7.1.2.2"/>
    </reaction>
</comment>
<comment type="subunit">
    <text evidence="1">F-type ATPases have 2 components, CF(1) - the catalytic core - and CF(0) - the membrane proton channel. CF(1) has five subunits: alpha(3), beta(3), gamma(1), delta(1), epsilon(1). CF(0) has three main subunits: a(1), b(2) and c(9-12). The alpha and beta chains form an alternating ring which encloses part of the gamma chain. CF(1) is attached to CF(0) by a central stalk formed by the gamma and epsilon chains, while a peripheral stalk is formed by the delta and b chains.</text>
</comment>
<comment type="subcellular location">
    <subcellularLocation>
        <location evidence="1">Cell inner membrane</location>
        <topology evidence="1">Peripheral membrane protein</topology>
    </subcellularLocation>
</comment>
<comment type="similarity">
    <text evidence="1">Belongs to the ATPase alpha/beta chains family.</text>
</comment>